<organism>
    <name type="scientific">Vibrio cholerae serotype O1 (strain ATCC 39315 / El Tor Inaba N16961)</name>
    <dbReference type="NCBI Taxonomy" id="243277"/>
    <lineage>
        <taxon>Bacteria</taxon>
        <taxon>Pseudomonadati</taxon>
        <taxon>Pseudomonadota</taxon>
        <taxon>Gammaproteobacteria</taxon>
        <taxon>Vibrionales</taxon>
        <taxon>Vibrionaceae</taxon>
        <taxon>Vibrio</taxon>
    </lineage>
</organism>
<proteinExistence type="inferred from homology"/>
<name>Y1055_VIBCH</name>
<comment type="function">
    <text evidence="1">Binds to DNA and alters its conformation. May be involved in regulation of gene expression, nucleoid organization and DNA protection.</text>
</comment>
<comment type="subunit">
    <text evidence="1">Homodimer.</text>
</comment>
<comment type="subcellular location">
    <subcellularLocation>
        <location evidence="1">Cytoplasm</location>
        <location evidence="1">Nucleoid</location>
    </subcellularLocation>
</comment>
<comment type="similarity">
    <text evidence="1">Belongs to the YbaB/EbfC family.</text>
</comment>
<comment type="sequence caution" evidence="3">
    <conflict type="erroneous initiation">
        <sequence resource="EMBL-CDS" id="AAF94214"/>
    </conflict>
</comment>
<reference key="1">
    <citation type="journal article" date="2000" name="Nature">
        <title>DNA sequence of both chromosomes of the cholera pathogen Vibrio cholerae.</title>
        <authorList>
            <person name="Heidelberg J.F."/>
            <person name="Eisen J.A."/>
            <person name="Nelson W.C."/>
            <person name="Clayton R.A."/>
            <person name="Gwinn M.L."/>
            <person name="Dodson R.J."/>
            <person name="Haft D.H."/>
            <person name="Hickey E.K."/>
            <person name="Peterson J.D."/>
            <person name="Umayam L.A."/>
            <person name="Gill S.R."/>
            <person name="Nelson K.E."/>
            <person name="Read T.D."/>
            <person name="Tettelin H."/>
            <person name="Richardson D.L."/>
            <person name="Ermolaeva M.D."/>
            <person name="Vamathevan J.J."/>
            <person name="Bass S."/>
            <person name="Qin H."/>
            <person name="Dragoi I."/>
            <person name="Sellers P."/>
            <person name="McDonald L.A."/>
            <person name="Utterback T.R."/>
            <person name="Fleischmann R.D."/>
            <person name="Nierman W.C."/>
            <person name="White O."/>
            <person name="Salzberg S.L."/>
            <person name="Smith H.O."/>
            <person name="Colwell R.R."/>
            <person name="Mekalanos J.J."/>
            <person name="Venter J.C."/>
            <person name="Fraser C.M."/>
        </authorList>
    </citation>
    <scope>NUCLEOTIDE SEQUENCE [LARGE SCALE GENOMIC DNA]</scope>
    <source>
        <strain>ATCC 39315 / El Tor Inaba N16961</strain>
    </source>
</reference>
<gene>
    <name type="ordered locus">VC_1055</name>
</gene>
<sequence length="109" mass="12036">MFGKGGMGNLMKQAQQMQERMQKLQEEIANMEVTGESGAGLVKVTVTGSHSVRRVNIDESLMEDDKEMLEDLIAAAFNDAARRIEETQKEKMASITGGMQLPPGMKMPF</sequence>
<evidence type="ECO:0000255" key="1">
    <source>
        <dbReference type="HAMAP-Rule" id="MF_00274"/>
    </source>
</evidence>
<evidence type="ECO:0000256" key="2">
    <source>
        <dbReference type="SAM" id="MobiDB-lite"/>
    </source>
</evidence>
<evidence type="ECO:0000305" key="3"/>
<keyword id="KW-0963">Cytoplasm</keyword>
<keyword id="KW-0238">DNA-binding</keyword>
<keyword id="KW-1185">Reference proteome</keyword>
<dbReference type="EMBL" id="AE003852">
    <property type="protein sequence ID" value="AAF94214.1"/>
    <property type="status" value="ALT_INIT"/>
    <property type="molecule type" value="Genomic_DNA"/>
</dbReference>
<dbReference type="PIR" id="A82247">
    <property type="entry name" value="A82247"/>
</dbReference>
<dbReference type="RefSeq" id="NP_230700.1">
    <property type="nucleotide sequence ID" value="NC_002505.1"/>
</dbReference>
<dbReference type="RefSeq" id="WP_000467102.1">
    <property type="nucleotide sequence ID" value="NZ_LT906614.1"/>
</dbReference>
<dbReference type="SMR" id="Q9KT50"/>
<dbReference type="STRING" id="243277.VC_1055"/>
<dbReference type="DNASU" id="2614325"/>
<dbReference type="EnsemblBacteria" id="AAF94214">
    <property type="protein sequence ID" value="AAF94214"/>
    <property type="gene ID" value="VC_1055"/>
</dbReference>
<dbReference type="KEGG" id="vch:VC_1055"/>
<dbReference type="PATRIC" id="fig|243277.26.peg.1007"/>
<dbReference type="eggNOG" id="COG0718">
    <property type="taxonomic scope" value="Bacteria"/>
</dbReference>
<dbReference type="HOGENOM" id="CLU_140930_0_0_6"/>
<dbReference type="Proteomes" id="UP000000584">
    <property type="component" value="Chromosome 1"/>
</dbReference>
<dbReference type="GO" id="GO:0043590">
    <property type="term" value="C:bacterial nucleoid"/>
    <property type="evidence" value="ECO:0007669"/>
    <property type="project" value="UniProtKB-UniRule"/>
</dbReference>
<dbReference type="GO" id="GO:0005829">
    <property type="term" value="C:cytosol"/>
    <property type="evidence" value="ECO:0000318"/>
    <property type="project" value="GO_Central"/>
</dbReference>
<dbReference type="GO" id="GO:0003677">
    <property type="term" value="F:DNA binding"/>
    <property type="evidence" value="ECO:0000318"/>
    <property type="project" value="GO_Central"/>
</dbReference>
<dbReference type="FunFam" id="3.30.1310.10:FF:000001">
    <property type="entry name" value="Nucleoid-associated protein YbaB"/>
    <property type="match status" value="1"/>
</dbReference>
<dbReference type="Gene3D" id="3.30.1310.10">
    <property type="entry name" value="Nucleoid-associated protein YbaB-like domain"/>
    <property type="match status" value="1"/>
</dbReference>
<dbReference type="HAMAP" id="MF_00274">
    <property type="entry name" value="DNA_YbaB_EbfC"/>
    <property type="match status" value="1"/>
</dbReference>
<dbReference type="InterPro" id="IPR036894">
    <property type="entry name" value="YbaB-like_sf"/>
</dbReference>
<dbReference type="InterPro" id="IPR004401">
    <property type="entry name" value="YbaB/EbfC"/>
</dbReference>
<dbReference type="NCBIfam" id="TIGR00103">
    <property type="entry name" value="DNA_YbaB_EbfC"/>
    <property type="match status" value="1"/>
</dbReference>
<dbReference type="PANTHER" id="PTHR33449">
    <property type="entry name" value="NUCLEOID-ASSOCIATED PROTEIN YBAB"/>
    <property type="match status" value="1"/>
</dbReference>
<dbReference type="PANTHER" id="PTHR33449:SF1">
    <property type="entry name" value="NUCLEOID-ASSOCIATED PROTEIN YBAB"/>
    <property type="match status" value="1"/>
</dbReference>
<dbReference type="Pfam" id="PF02575">
    <property type="entry name" value="YbaB_DNA_bd"/>
    <property type="match status" value="1"/>
</dbReference>
<dbReference type="PIRSF" id="PIRSF004555">
    <property type="entry name" value="UCP004555"/>
    <property type="match status" value="1"/>
</dbReference>
<dbReference type="SUPFAM" id="SSF82607">
    <property type="entry name" value="YbaB-like"/>
    <property type="match status" value="1"/>
</dbReference>
<protein>
    <recommendedName>
        <fullName evidence="1">Nucleoid-associated protein VC_1055</fullName>
    </recommendedName>
</protein>
<accession>Q9KT50</accession>
<feature type="chain" id="PRO_0000170461" description="Nucleoid-associated protein VC_1055">
    <location>
        <begin position="1"/>
        <end position="109"/>
    </location>
</feature>
<feature type="region of interest" description="Disordered" evidence="2">
    <location>
        <begin position="1"/>
        <end position="22"/>
    </location>
</feature>